<organism>
    <name type="scientific">Histophilus somni (strain 129Pt)</name>
    <name type="common">Haemophilus somnus</name>
    <dbReference type="NCBI Taxonomy" id="205914"/>
    <lineage>
        <taxon>Bacteria</taxon>
        <taxon>Pseudomonadati</taxon>
        <taxon>Pseudomonadota</taxon>
        <taxon>Gammaproteobacteria</taxon>
        <taxon>Pasteurellales</taxon>
        <taxon>Pasteurellaceae</taxon>
        <taxon>Histophilus</taxon>
    </lineage>
</organism>
<accession>Q0I273</accession>
<feature type="chain" id="PRO_1000006366" description="Glycine--tRNA ligase beta subunit">
    <location>
        <begin position="1"/>
        <end position="688"/>
    </location>
</feature>
<keyword id="KW-0030">Aminoacyl-tRNA synthetase</keyword>
<keyword id="KW-0067">ATP-binding</keyword>
<keyword id="KW-0963">Cytoplasm</keyword>
<keyword id="KW-0436">Ligase</keyword>
<keyword id="KW-0547">Nucleotide-binding</keyword>
<keyword id="KW-0648">Protein biosynthesis</keyword>
<comment type="catalytic activity">
    <reaction evidence="1">
        <text>tRNA(Gly) + glycine + ATP = glycyl-tRNA(Gly) + AMP + diphosphate</text>
        <dbReference type="Rhea" id="RHEA:16013"/>
        <dbReference type="Rhea" id="RHEA-COMP:9664"/>
        <dbReference type="Rhea" id="RHEA-COMP:9683"/>
        <dbReference type="ChEBI" id="CHEBI:30616"/>
        <dbReference type="ChEBI" id="CHEBI:33019"/>
        <dbReference type="ChEBI" id="CHEBI:57305"/>
        <dbReference type="ChEBI" id="CHEBI:78442"/>
        <dbReference type="ChEBI" id="CHEBI:78522"/>
        <dbReference type="ChEBI" id="CHEBI:456215"/>
        <dbReference type="EC" id="6.1.1.14"/>
    </reaction>
</comment>
<comment type="subunit">
    <text evidence="1">Tetramer of two alpha and two beta subunits.</text>
</comment>
<comment type="subcellular location">
    <subcellularLocation>
        <location evidence="1">Cytoplasm</location>
    </subcellularLocation>
</comment>
<comment type="similarity">
    <text evidence="1">Belongs to the class-II aminoacyl-tRNA synthetase family.</text>
</comment>
<dbReference type="EC" id="6.1.1.14" evidence="1"/>
<dbReference type="EMBL" id="CP000436">
    <property type="protein sequence ID" value="ABI24756.1"/>
    <property type="molecule type" value="Genomic_DNA"/>
</dbReference>
<dbReference type="SMR" id="Q0I273"/>
<dbReference type="KEGG" id="hso:HS_0479"/>
<dbReference type="eggNOG" id="COG0751">
    <property type="taxonomic scope" value="Bacteria"/>
</dbReference>
<dbReference type="HOGENOM" id="CLU_007220_2_2_6"/>
<dbReference type="GO" id="GO:0005829">
    <property type="term" value="C:cytosol"/>
    <property type="evidence" value="ECO:0007669"/>
    <property type="project" value="TreeGrafter"/>
</dbReference>
<dbReference type="GO" id="GO:0004814">
    <property type="term" value="F:arginine-tRNA ligase activity"/>
    <property type="evidence" value="ECO:0007669"/>
    <property type="project" value="InterPro"/>
</dbReference>
<dbReference type="GO" id="GO:0005524">
    <property type="term" value="F:ATP binding"/>
    <property type="evidence" value="ECO:0007669"/>
    <property type="project" value="UniProtKB-UniRule"/>
</dbReference>
<dbReference type="GO" id="GO:0004820">
    <property type="term" value="F:glycine-tRNA ligase activity"/>
    <property type="evidence" value="ECO:0007669"/>
    <property type="project" value="UniProtKB-UniRule"/>
</dbReference>
<dbReference type="GO" id="GO:0006420">
    <property type="term" value="P:arginyl-tRNA aminoacylation"/>
    <property type="evidence" value="ECO:0007669"/>
    <property type="project" value="InterPro"/>
</dbReference>
<dbReference type="GO" id="GO:0006426">
    <property type="term" value="P:glycyl-tRNA aminoacylation"/>
    <property type="evidence" value="ECO:0007669"/>
    <property type="project" value="UniProtKB-UniRule"/>
</dbReference>
<dbReference type="HAMAP" id="MF_00255">
    <property type="entry name" value="Gly_tRNA_synth_beta"/>
    <property type="match status" value="1"/>
</dbReference>
<dbReference type="InterPro" id="IPR008909">
    <property type="entry name" value="DALR_anticod-bd"/>
</dbReference>
<dbReference type="InterPro" id="IPR015944">
    <property type="entry name" value="Gly-tRNA-synth_bsu"/>
</dbReference>
<dbReference type="InterPro" id="IPR006194">
    <property type="entry name" value="Gly-tRNA-synth_heterodimer"/>
</dbReference>
<dbReference type="NCBIfam" id="TIGR00211">
    <property type="entry name" value="glyS"/>
    <property type="match status" value="1"/>
</dbReference>
<dbReference type="PANTHER" id="PTHR30075:SF2">
    <property type="entry name" value="GLYCINE--TRNA LIGASE, CHLOROPLASTIC_MITOCHONDRIAL 2"/>
    <property type="match status" value="1"/>
</dbReference>
<dbReference type="PANTHER" id="PTHR30075">
    <property type="entry name" value="GLYCYL-TRNA SYNTHETASE"/>
    <property type="match status" value="1"/>
</dbReference>
<dbReference type="Pfam" id="PF05746">
    <property type="entry name" value="DALR_1"/>
    <property type="match status" value="1"/>
</dbReference>
<dbReference type="Pfam" id="PF02092">
    <property type="entry name" value="tRNA_synt_2f"/>
    <property type="match status" value="1"/>
</dbReference>
<dbReference type="PRINTS" id="PR01045">
    <property type="entry name" value="TRNASYNTHGB"/>
</dbReference>
<dbReference type="SUPFAM" id="SSF109604">
    <property type="entry name" value="HD-domain/PDEase-like"/>
    <property type="match status" value="1"/>
</dbReference>
<dbReference type="PROSITE" id="PS50861">
    <property type="entry name" value="AA_TRNA_LIGASE_II_GLYAB"/>
    <property type="match status" value="1"/>
</dbReference>
<protein>
    <recommendedName>
        <fullName evidence="1">Glycine--tRNA ligase beta subunit</fullName>
        <ecNumber evidence="1">6.1.1.14</ecNumber>
    </recommendedName>
    <alternativeName>
        <fullName evidence="1">Glycyl-tRNA synthetase beta subunit</fullName>
        <shortName evidence="1">GlyRS</shortName>
    </alternativeName>
</protein>
<gene>
    <name evidence="1" type="primary">glyS</name>
    <name type="ordered locus">HS_0479</name>
</gene>
<evidence type="ECO:0000255" key="1">
    <source>
        <dbReference type="HAMAP-Rule" id="MF_00255"/>
    </source>
</evidence>
<reference key="1">
    <citation type="journal article" date="2007" name="J. Bacteriol.">
        <title>Complete genome sequence of Haemophilus somnus (Histophilus somni) strain 129Pt and comparison to Haemophilus ducreyi 35000HP and Haemophilus influenzae Rd.</title>
        <authorList>
            <person name="Challacombe J.F."/>
            <person name="Duncan A.J."/>
            <person name="Brettin T.S."/>
            <person name="Bruce D."/>
            <person name="Chertkov O."/>
            <person name="Detter J.C."/>
            <person name="Han C.S."/>
            <person name="Misra M."/>
            <person name="Richardson P."/>
            <person name="Tapia R."/>
            <person name="Thayer N."/>
            <person name="Xie G."/>
            <person name="Inzana T.J."/>
        </authorList>
    </citation>
    <scope>NUCLEOTIDE SEQUENCE [LARGE SCALE GENOMIC DNA]</scope>
    <source>
        <strain>129Pt</strain>
    </source>
</reference>
<name>SYGB_HISS1</name>
<sequence>MTTQNFLAEIGTEELPPKALKKLATAFAENVEQELNQAGLAFEKVEWFAAPRRLAVKVLGLAEAQPSKQVEKRGPAVSAAFDAEGKPTKAAEGWARGCGITVEQAERLSTDKGEWLVHRAVIEGQLTKNLLVGIIDKALAGLPIPKTMRWGDKTEQFVRPVHTVTLLFGADLIEGEILGVASGRTVRGHRFLGEREFSLDHADQYPQLLKERGSVVADFNERKALILATSREKATALGGVADIEEELLEEVTSLVEYPNVLTAKFEERFLAVPAEALVYTMKGDQKYFPIYDKDGKLLPHFIFVSNINPDDPSKIIEGNEKVVRPRLTDAEFFFKTDLKQKLEDRLPRLETVLFQQQLGTLRDKTARIEALAGEIAAQIGADQTKAKRAGLLSKCDLMTNMVFEFTDTQGVMGMHYARHDGEDEDVAVALNEQYMPRFAGDTLPNSLVACSVALADKIDTLTGIFGIGQSPKGSADPFALRRAALGCLRIIVEKNLPLDLADIVAKATALFGDKLTNKNVVDEVVDFMLGRFRAWYESEGIAVDVIQSVLARRPTKPADFDARVRAVSHFRTLDSAEALAAANKRVSNILAKADIAIGEIDLGVCVESAEKTLAEAVLALKGEVQPLIAQGDYTAVLDKLANLRQPIDAFFDGVMVNVEEQTLRQNRLAILSTLQNLFLQVADISVLQ</sequence>
<proteinExistence type="inferred from homology"/>